<evidence type="ECO:0000255" key="1">
    <source>
        <dbReference type="HAMAP-Rule" id="MF_00758"/>
    </source>
</evidence>
<gene>
    <name type="ordered locus">BPSL2693</name>
</gene>
<protein>
    <recommendedName>
        <fullName evidence="1">UPF0301 protein BPSL2693</fullName>
    </recommendedName>
</protein>
<reference key="1">
    <citation type="journal article" date="2004" name="Proc. Natl. Acad. Sci. U.S.A.">
        <title>Genomic plasticity of the causative agent of melioidosis, Burkholderia pseudomallei.</title>
        <authorList>
            <person name="Holden M.T.G."/>
            <person name="Titball R.W."/>
            <person name="Peacock S.J."/>
            <person name="Cerdeno-Tarraga A.-M."/>
            <person name="Atkins T."/>
            <person name="Crossman L.C."/>
            <person name="Pitt T."/>
            <person name="Churcher C."/>
            <person name="Mungall K.L."/>
            <person name="Bentley S.D."/>
            <person name="Sebaihia M."/>
            <person name="Thomson N.R."/>
            <person name="Bason N."/>
            <person name="Beacham I.R."/>
            <person name="Brooks K."/>
            <person name="Brown K.A."/>
            <person name="Brown N.F."/>
            <person name="Challis G.L."/>
            <person name="Cherevach I."/>
            <person name="Chillingworth T."/>
            <person name="Cronin A."/>
            <person name="Crossett B."/>
            <person name="Davis P."/>
            <person name="DeShazer D."/>
            <person name="Feltwell T."/>
            <person name="Fraser A."/>
            <person name="Hance Z."/>
            <person name="Hauser H."/>
            <person name="Holroyd S."/>
            <person name="Jagels K."/>
            <person name="Keith K.E."/>
            <person name="Maddison M."/>
            <person name="Moule S."/>
            <person name="Price C."/>
            <person name="Quail M.A."/>
            <person name="Rabbinowitsch E."/>
            <person name="Rutherford K."/>
            <person name="Sanders M."/>
            <person name="Simmonds M."/>
            <person name="Songsivilai S."/>
            <person name="Stevens K."/>
            <person name="Tumapa S."/>
            <person name="Vesaratchavest M."/>
            <person name="Whitehead S."/>
            <person name="Yeats C."/>
            <person name="Barrell B.G."/>
            <person name="Oyston P.C.F."/>
            <person name="Parkhill J."/>
        </authorList>
    </citation>
    <scope>NUCLEOTIDE SEQUENCE [LARGE SCALE GENOMIC DNA]</scope>
    <source>
        <strain>K96243</strain>
    </source>
</reference>
<accession>Q63RH9</accession>
<comment type="similarity">
    <text evidence="1">Belongs to the UPF0301 (AlgH) family.</text>
</comment>
<organism>
    <name type="scientific">Burkholderia pseudomallei (strain K96243)</name>
    <dbReference type="NCBI Taxonomy" id="272560"/>
    <lineage>
        <taxon>Bacteria</taxon>
        <taxon>Pseudomonadati</taxon>
        <taxon>Pseudomonadota</taxon>
        <taxon>Betaproteobacteria</taxon>
        <taxon>Burkholderiales</taxon>
        <taxon>Burkholderiaceae</taxon>
        <taxon>Burkholderia</taxon>
        <taxon>pseudomallei group</taxon>
    </lineage>
</organism>
<keyword id="KW-1185">Reference proteome</keyword>
<feature type="chain" id="PRO_0000258808" description="UPF0301 protein BPSL2693">
    <location>
        <begin position="1"/>
        <end position="192"/>
    </location>
</feature>
<sequence>MSKSSDRINLTNQFLIAMPNMADPTFSGTVVYLCDHSERGALGLVINRPTDIDLESLFNRIDLKLEIEPLLHIPVYFGGPVQTERGFVLHEPVEGSAYNSSMTVEGGLEMTTSKDVLEAVATGTGPKRFLLTLGHAGWGAGQLEEEISKNGWLTVAADPRIVFDTPAEERFEAALGLLGVSSSMLSGEAGHA</sequence>
<dbReference type="EMBL" id="BX571965">
    <property type="protein sequence ID" value="CAH36701.1"/>
    <property type="molecule type" value="Genomic_DNA"/>
</dbReference>
<dbReference type="RefSeq" id="WP_004185441.1">
    <property type="nucleotide sequence ID" value="NZ_CP009538.1"/>
</dbReference>
<dbReference type="RefSeq" id="YP_109289.1">
    <property type="nucleotide sequence ID" value="NC_006350.1"/>
</dbReference>
<dbReference type="SMR" id="Q63RH9"/>
<dbReference type="STRING" id="272560.BPSL2693"/>
<dbReference type="KEGG" id="bps:BPSL2693"/>
<dbReference type="PATRIC" id="fig|272560.51.peg.2649"/>
<dbReference type="eggNOG" id="COG1678">
    <property type="taxonomic scope" value="Bacteria"/>
</dbReference>
<dbReference type="Proteomes" id="UP000000605">
    <property type="component" value="Chromosome 1"/>
</dbReference>
<dbReference type="GO" id="GO:0005829">
    <property type="term" value="C:cytosol"/>
    <property type="evidence" value="ECO:0007669"/>
    <property type="project" value="TreeGrafter"/>
</dbReference>
<dbReference type="Gene3D" id="3.40.1740.10">
    <property type="entry name" value="VC0467-like"/>
    <property type="match status" value="1"/>
</dbReference>
<dbReference type="HAMAP" id="MF_00758">
    <property type="entry name" value="UPF0301"/>
    <property type="match status" value="1"/>
</dbReference>
<dbReference type="InterPro" id="IPR003774">
    <property type="entry name" value="AlgH-like"/>
</dbReference>
<dbReference type="NCBIfam" id="NF001266">
    <property type="entry name" value="PRK00228.1-1"/>
    <property type="match status" value="1"/>
</dbReference>
<dbReference type="NCBIfam" id="NF001267">
    <property type="entry name" value="PRK00228.1-2"/>
    <property type="match status" value="1"/>
</dbReference>
<dbReference type="PANTHER" id="PTHR30327">
    <property type="entry name" value="UNCHARACTERIZED PROTEIN YQGE"/>
    <property type="match status" value="1"/>
</dbReference>
<dbReference type="PANTHER" id="PTHR30327:SF1">
    <property type="entry name" value="UPF0301 PROTEIN YQGE"/>
    <property type="match status" value="1"/>
</dbReference>
<dbReference type="Pfam" id="PF02622">
    <property type="entry name" value="DUF179"/>
    <property type="match status" value="1"/>
</dbReference>
<dbReference type="SUPFAM" id="SSF143456">
    <property type="entry name" value="VC0467-like"/>
    <property type="match status" value="1"/>
</dbReference>
<proteinExistence type="inferred from homology"/>
<name>Y2693_BURPS</name>